<reference key="1">
    <citation type="submission" date="2003-10" db="EMBL/GenBank/DDBJ databases">
        <title>The complete genome sequence of the alkaliphilic Bacillus clausii KSM-K16.</title>
        <authorList>
            <person name="Takaki Y."/>
            <person name="Kageyama Y."/>
            <person name="Shimamura S."/>
            <person name="Suzuki H."/>
            <person name="Nishi S."/>
            <person name="Hatada Y."/>
            <person name="Kawai S."/>
            <person name="Ito S."/>
            <person name="Horikoshi K."/>
        </authorList>
    </citation>
    <scope>NUCLEOTIDE SEQUENCE [LARGE SCALE GENOMIC DNA]</scope>
    <source>
        <strain>KSM-K16</strain>
    </source>
</reference>
<proteinExistence type="inferred from homology"/>
<gene>
    <name evidence="1" type="primary">lexA</name>
    <name type="ordered locus">ABC2167</name>
</gene>
<comment type="function">
    <text evidence="1">Represses a number of genes involved in the response to DNA damage (SOS response), including recA and lexA. In the presence of single-stranded DNA, RecA interacts with LexA causing an autocatalytic cleavage which disrupts the DNA-binding part of LexA, leading to derepression of the SOS regulon and eventually DNA repair.</text>
</comment>
<comment type="catalytic activity">
    <reaction evidence="1">
        <text>Hydrolysis of Ala-|-Gly bond in repressor LexA.</text>
        <dbReference type="EC" id="3.4.21.88"/>
    </reaction>
</comment>
<comment type="subunit">
    <text evidence="1">Homodimer.</text>
</comment>
<comment type="similarity">
    <text evidence="1">Belongs to the peptidase S24 family.</text>
</comment>
<protein>
    <recommendedName>
        <fullName evidence="1">LexA repressor</fullName>
        <ecNumber evidence="1">3.4.21.88</ecNumber>
    </recommendedName>
</protein>
<evidence type="ECO:0000255" key="1">
    <source>
        <dbReference type="HAMAP-Rule" id="MF_00015"/>
    </source>
</evidence>
<dbReference type="EC" id="3.4.21.88" evidence="1"/>
<dbReference type="EMBL" id="AP006627">
    <property type="protein sequence ID" value="BAD64702.1"/>
    <property type="molecule type" value="Genomic_DNA"/>
</dbReference>
<dbReference type="RefSeq" id="WP_011247010.1">
    <property type="nucleotide sequence ID" value="NC_006582.1"/>
</dbReference>
<dbReference type="SMR" id="Q5WG03"/>
<dbReference type="STRING" id="66692.ABC2167"/>
<dbReference type="MEROPS" id="S24.001"/>
<dbReference type="GeneID" id="86926318"/>
<dbReference type="KEGG" id="bcl:ABC2167"/>
<dbReference type="eggNOG" id="COG1974">
    <property type="taxonomic scope" value="Bacteria"/>
</dbReference>
<dbReference type="HOGENOM" id="CLU_066192_45_1_9"/>
<dbReference type="OrthoDB" id="9802364at2"/>
<dbReference type="Proteomes" id="UP000001168">
    <property type="component" value="Chromosome"/>
</dbReference>
<dbReference type="GO" id="GO:0003677">
    <property type="term" value="F:DNA binding"/>
    <property type="evidence" value="ECO:0007669"/>
    <property type="project" value="UniProtKB-UniRule"/>
</dbReference>
<dbReference type="GO" id="GO:0004252">
    <property type="term" value="F:serine-type endopeptidase activity"/>
    <property type="evidence" value="ECO:0007669"/>
    <property type="project" value="UniProtKB-UniRule"/>
</dbReference>
<dbReference type="GO" id="GO:0006281">
    <property type="term" value="P:DNA repair"/>
    <property type="evidence" value="ECO:0007669"/>
    <property type="project" value="UniProtKB-UniRule"/>
</dbReference>
<dbReference type="GO" id="GO:0006260">
    <property type="term" value="P:DNA replication"/>
    <property type="evidence" value="ECO:0007669"/>
    <property type="project" value="UniProtKB-UniRule"/>
</dbReference>
<dbReference type="GO" id="GO:0045892">
    <property type="term" value="P:negative regulation of DNA-templated transcription"/>
    <property type="evidence" value="ECO:0007669"/>
    <property type="project" value="UniProtKB-UniRule"/>
</dbReference>
<dbReference type="GO" id="GO:0006508">
    <property type="term" value="P:proteolysis"/>
    <property type="evidence" value="ECO:0007669"/>
    <property type="project" value="InterPro"/>
</dbReference>
<dbReference type="GO" id="GO:0009432">
    <property type="term" value="P:SOS response"/>
    <property type="evidence" value="ECO:0007669"/>
    <property type="project" value="UniProtKB-UniRule"/>
</dbReference>
<dbReference type="CDD" id="cd00090">
    <property type="entry name" value="HTH_ARSR"/>
    <property type="match status" value="1"/>
</dbReference>
<dbReference type="CDD" id="cd06529">
    <property type="entry name" value="S24_LexA-like"/>
    <property type="match status" value="1"/>
</dbReference>
<dbReference type="FunFam" id="1.10.10.10:FF:000009">
    <property type="entry name" value="LexA repressor"/>
    <property type="match status" value="1"/>
</dbReference>
<dbReference type="FunFam" id="2.10.109.10:FF:000001">
    <property type="entry name" value="LexA repressor"/>
    <property type="match status" value="1"/>
</dbReference>
<dbReference type="Gene3D" id="2.10.109.10">
    <property type="entry name" value="Umud Fragment, subunit A"/>
    <property type="match status" value="1"/>
</dbReference>
<dbReference type="Gene3D" id="1.10.10.10">
    <property type="entry name" value="Winged helix-like DNA-binding domain superfamily/Winged helix DNA-binding domain"/>
    <property type="match status" value="1"/>
</dbReference>
<dbReference type="HAMAP" id="MF_00015">
    <property type="entry name" value="LexA"/>
    <property type="match status" value="1"/>
</dbReference>
<dbReference type="InterPro" id="IPR011991">
    <property type="entry name" value="ArsR-like_HTH"/>
</dbReference>
<dbReference type="InterPro" id="IPR006200">
    <property type="entry name" value="LexA"/>
</dbReference>
<dbReference type="InterPro" id="IPR039418">
    <property type="entry name" value="LexA-like"/>
</dbReference>
<dbReference type="InterPro" id="IPR036286">
    <property type="entry name" value="LexA/Signal_pep-like_sf"/>
</dbReference>
<dbReference type="InterPro" id="IPR006199">
    <property type="entry name" value="LexA_DNA-bd_dom"/>
</dbReference>
<dbReference type="InterPro" id="IPR050077">
    <property type="entry name" value="LexA_repressor"/>
</dbReference>
<dbReference type="InterPro" id="IPR006197">
    <property type="entry name" value="Peptidase_S24_LexA"/>
</dbReference>
<dbReference type="InterPro" id="IPR015927">
    <property type="entry name" value="Peptidase_S24_S26A/B/C"/>
</dbReference>
<dbReference type="InterPro" id="IPR036388">
    <property type="entry name" value="WH-like_DNA-bd_sf"/>
</dbReference>
<dbReference type="InterPro" id="IPR036390">
    <property type="entry name" value="WH_DNA-bd_sf"/>
</dbReference>
<dbReference type="NCBIfam" id="TIGR00498">
    <property type="entry name" value="lexA"/>
    <property type="match status" value="1"/>
</dbReference>
<dbReference type="PANTHER" id="PTHR33516">
    <property type="entry name" value="LEXA REPRESSOR"/>
    <property type="match status" value="1"/>
</dbReference>
<dbReference type="PANTHER" id="PTHR33516:SF2">
    <property type="entry name" value="LEXA REPRESSOR-RELATED"/>
    <property type="match status" value="1"/>
</dbReference>
<dbReference type="Pfam" id="PF01726">
    <property type="entry name" value="LexA_DNA_bind"/>
    <property type="match status" value="1"/>
</dbReference>
<dbReference type="Pfam" id="PF00717">
    <property type="entry name" value="Peptidase_S24"/>
    <property type="match status" value="1"/>
</dbReference>
<dbReference type="PRINTS" id="PR00726">
    <property type="entry name" value="LEXASERPTASE"/>
</dbReference>
<dbReference type="SUPFAM" id="SSF51306">
    <property type="entry name" value="LexA/Signal peptidase"/>
    <property type="match status" value="1"/>
</dbReference>
<dbReference type="SUPFAM" id="SSF46785">
    <property type="entry name" value="Winged helix' DNA-binding domain"/>
    <property type="match status" value="1"/>
</dbReference>
<name>LEXA_SHOC1</name>
<keyword id="KW-0068">Autocatalytic cleavage</keyword>
<keyword id="KW-0227">DNA damage</keyword>
<keyword id="KW-0234">DNA repair</keyword>
<keyword id="KW-0235">DNA replication</keyword>
<keyword id="KW-0238">DNA-binding</keyword>
<keyword id="KW-0378">Hydrolase</keyword>
<keyword id="KW-1185">Reference proteome</keyword>
<keyword id="KW-0678">Repressor</keyword>
<keyword id="KW-0742">SOS response</keyword>
<keyword id="KW-0804">Transcription</keyword>
<keyword id="KW-0805">Transcription regulation</keyword>
<organism>
    <name type="scientific">Shouchella clausii (strain KSM-K16)</name>
    <name type="common">Alkalihalobacillus clausii</name>
    <dbReference type="NCBI Taxonomy" id="66692"/>
    <lineage>
        <taxon>Bacteria</taxon>
        <taxon>Bacillati</taxon>
        <taxon>Bacillota</taxon>
        <taxon>Bacilli</taxon>
        <taxon>Bacillales</taxon>
        <taxon>Bacillaceae</taxon>
        <taxon>Shouchella</taxon>
    </lineage>
</organism>
<feature type="chain" id="PRO_0000170009" description="LexA repressor">
    <location>
        <begin position="1"/>
        <end position="208"/>
    </location>
</feature>
<feature type="DNA-binding region" description="H-T-H motif" evidence="1">
    <location>
        <begin position="28"/>
        <end position="48"/>
    </location>
</feature>
<feature type="active site" description="For autocatalytic cleavage activity" evidence="1">
    <location>
        <position position="130"/>
    </location>
</feature>
<feature type="active site" description="For autocatalytic cleavage activity" evidence="1">
    <location>
        <position position="168"/>
    </location>
</feature>
<feature type="site" description="Cleavage; by autolysis" evidence="1">
    <location>
        <begin position="95"/>
        <end position="96"/>
    </location>
</feature>
<accession>Q5WG03</accession>
<sequence length="208" mass="23179">MSKLSKRQEEILAYIKDEVKKKGYPPSVREIGEAVGLASSSTVHGHLARLEKKGYIRRDPTKPRAIEVLSLGFDNDTFVKKETASFIPVIGKVTAGVPITAVENVEDYLPLPDHLAAYDNTYALVIQGESMIEAGIYDGDQVIVRQQQTADNGDIIVAMTEDNEATVKRFFREKDYIRLQPENSSMEPIILENCTILGKVIGVFRTIH</sequence>